<sequence length="109" mass="11272">MKDLGGLMKQAQAMQQKLADAQARLAETTVDGTSGGGMVTVTLMGNGELVRVLMDESLVQPGEGEVIADLIIAAHADAKKKLDAKQAQMMQDAAGPMAGLMGGLPGMKF</sequence>
<comment type="function">
    <text evidence="1">Binds to DNA and alters its conformation. May be involved in regulation of gene expression, nucleoid organization and DNA protection.</text>
</comment>
<comment type="subunit">
    <text evidence="1">Homodimer.</text>
</comment>
<comment type="subcellular location">
    <subcellularLocation>
        <location evidence="1">Cytoplasm</location>
        <location evidence="1">Nucleoid</location>
    </subcellularLocation>
</comment>
<comment type="similarity">
    <text evidence="1">Belongs to the YbaB/EbfC family.</text>
</comment>
<gene>
    <name type="ordered locus">CCNA_00269</name>
</gene>
<organism>
    <name type="scientific">Caulobacter vibrioides (strain NA1000 / CB15N)</name>
    <name type="common">Caulobacter crescentus</name>
    <dbReference type="NCBI Taxonomy" id="565050"/>
    <lineage>
        <taxon>Bacteria</taxon>
        <taxon>Pseudomonadati</taxon>
        <taxon>Pseudomonadota</taxon>
        <taxon>Alphaproteobacteria</taxon>
        <taxon>Caulobacterales</taxon>
        <taxon>Caulobacteraceae</taxon>
        <taxon>Caulobacter</taxon>
    </lineage>
</organism>
<dbReference type="EMBL" id="CP001340">
    <property type="protein sequence ID" value="ACL93736.1"/>
    <property type="molecule type" value="Genomic_DNA"/>
</dbReference>
<dbReference type="RefSeq" id="WP_012639925.1">
    <property type="nucleotide sequence ID" value="NC_011916.1"/>
</dbReference>
<dbReference type="RefSeq" id="YP_002515644.1">
    <property type="nucleotide sequence ID" value="NC_011916.1"/>
</dbReference>
<dbReference type="SMR" id="B8GYD9"/>
<dbReference type="GeneID" id="7330722"/>
<dbReference type="KEGG" id="ccs:CCNA_00269"/>
<dbReference type="PATRIC" id="fig|565050.3.peg.266"/>
<dbReference type="HOGENOM" id="CLU_140930_4_1_5"/>
<dbReference type="OrthoDB" id="9803080at2"/>
<dbReference type="Proteomes" id="UP000001364">
    <property type="component" value="Chromosome"/>
</dbReference>
<dbReference type="GO" id="GO:0043590">
    <property type="term" value="C:bacterial nucleoid"/>
    <property type="evidence" value="ECO:0007669"/>
    <property type="project" value="UniProtKB-UniRule"/>
</dbReference>
<dbReference type="GO" id="GO:0005829">
    <property type="term" value="C:cytosol"/>
    <property type="evidence" value="ECO:0007669"/>
    <property type="project" value="TreeGrafter"/>
</dbReference>
<dbReference type="GO" id="GO:0003677">
    <property type="term" value="F:DNA binding"/>
    <property type="evidence" value="ECO:0007669"/>
    <property type="project" value="UniProtKB-UniRule"/>
</dbReference>
<dbReference type="Gene3D" id="3.30.1310.10">
    <property type="entry name" value="Nucleoid-associated protein YbaB-like domain"/>
    <property type="match status" value="1"/>
</dbReference>
<dbReference type="HAMAP" id="MF_00274">
    <property type="entry name" value="DNA_YbaB_EbfC"/>
    <property type="match status" value="1"/>
</dbReference>
<dbReference type="InterPro" id="IPR036894">
    <property type="entry name" value="YbaB-like_sf"/>
</dbReference>
<dbReference type="InterPro" id="IPR004401">
    <property type="entry name" value="YbaB/EbfC"/>
</dbReference>
<dbReference type="NCBIfam" id="TIGR00103">
    <property type="entry name" value="DNA_YbaB_EbfC"/>
    <property type="match status" value="1"/>
</dbReference>
<dbReference type="NCBIfam" id="NF011218">
    <property type="entry name" value="PRK14625.1"/>
    <property type="match status" value="1"/>
</dbReference>
<dbReference type="PANTHER" id="PTHR33449">
    <property type="entry name" value="NUCLEOID-ASSOCIATED PROTEIN YBAB"/>
    <property type="match status" value="1"/>
</dbReference>
<dbReference type="PANTHER" id="PTHR33449:SF1">
    <property type="entry name" value="NUCLEOID-ASSOCIATED PROTEIN YBAB"/>
    <property type="match status" value="1"/>
</dbReference>
<dbReference type="Pfam" id="PF02575">
    <property type="entry name" value="YbaB_DNA_bd"/>
    <property type="match status" value="1"/>
</dbReference>
<dbReference type="PIRSF" id="PIRSF004555">
    <property type="entry name" value="UCP004555"/>
    <property type="match status" value="1"/>
</dbReference>
<dbReference type="SUPFAM" id="SSF82607">
    <property type="entry name" value="YbaB-like"/>
    <property type="match status" value="1"/>
</dbReference>
<keyword id="KW-0963">Cytoplasm</keyword>
<keyword id="KW-0238">DNA-binding</keyword>
<keyword id="KW-1185">Reference proteome</keyword>
<evidence type="ECO:0000255" key="1">
    <source>
        <dbReference type="HAMAP-Rule" id="MF_00274"/>
    </source>
</evidence>
<proteinExistence type="inferred from homology"/>
<reference key="1">
    <citation type="journal article" date="2010" name="J. Bacteriol.">
        <title>The genetic basis of laboratory adaptation in Caulobacter crescentus.</title>
        <authorList>
            <person name="Marks M.E."/>
            <person name="Castro-Rojas C.M."/>
            <person name="Teiling C."/>
            <person name="Du L."/>
            <person name="Kapatral V."/>
            <person name="Walunas T.L."/>
            <person name="Crosson S."/>
        </authorList>
    </citation>
    <scope>NUCLEOTIDE SEQUENCE [LARGE SCALE GENOMIC DNA]</scope>
    <source>
        <strain>NA1000 / CB15N</strain>
    </source>
</reference>
<name>Y269_CAUVN</name>
<protein>
    <recommendedName>
        <fullName evidence="1">Nucleoid-associated protein CCNA_00269</fullName>
    </recommendedName>
</protein>
<accession>B8GYD9</accession>
<feature type="chain" id="PRO_1000197648" description="Nucleoid-associated protein CCNA_00269">
    <location>
        <begin position="1"/>
        <end position="109"/>
    </location>
</feature>